<proteinExistence type="predicted"/>
<accession>P17575</accession>
<feature type="chain" id="PRO_0000222499" description="6.8 kDa protein">
    <location>
        <begin position="1"/>
        <end position="58"/>
    </location>
</feature>
<name>V07K_STMV</name>
<reference key="1">
    <citation type="journal article" date="1989" name="Virology">
        <title>Nucleotide sequence and translation of satellite tobacco mosaic virus RNA.</title>
        <authorList>
            <person name="Mirkov T.E."/>
            <person name="Mathews D.M."/>
            <person name="du Plessis D.H."/>
            <person name="Dodds J.A."/>
        </authorList>
    </citation>
    <scope>NUCLEOTIDE SEQUENCE [GENOMIC RNA]</scope>
</reference>
<organism>
    <name type="scientific">Satellite tobacco mosaic virus</name>
    <name type="common">STMV</name>
    <dbReference type="NCBI Taxonomy" id="12881"/>
    <lineage>
        <taxon>Viruses</taxon>
        <taxon>Riboviria</taxon>
        <taxon>Virtovirus</taxon>
        <taxon>Tobacco virtovirus 1</taxon>
    </lineage>
</organism>
<comment type="miscellaneous">
    <text>This virus depends on tobacco mosaic virus for its replication.</text>
</comment>
<organismHost>
    <name type="scientific">Nicotiana glauca</name>
    <name type="common">Glaucous tobacco</name>
    <name type="synonym">Tree tobacco</name>
    <dbReference type="NCBI Taxonomy" id="4090"/>
</organismHost>
<dbReference type="EMBL" id="M25782">
    <property type="protein sequence ID" value="AAA47784.1"/>
    <property type="molecule type" value="Genomic_RNA"/>
</dbReference>
<dbReference type="PIR" id="JA0134">
    <property type="entry name" value="WMTM68"/>
</dbReference>
<dbReference type="Proteomes" id="UP000232931">
    <property type="component" value="Segment"/>
</dbReference>
<protein>
    <recommendedName>
        <fullName>6.8 kDa protein</fullName>
    </recommendedName>
</protein>
<sequence length="58" mass="6750">MLLGDIGGKHIAFFYKRPSVAIITWRPILGFSCCFQLWGEVRLNQTVNRRVTIRMLLL</sequence>